<evidence type="ECO:0000255" key="1">
    <source>
        <dbReference type="HAMAP-Rule" id="MF_01326"/>
    </source>
</evidence>
<evidence type="ECO:0000305" key="2"/>
<name>RL24_AERS4</name>
<reference key="1">
    <citation type="journal article" date="2008" name="BMC Genomics">
        <title>The genome of Aeromonas salmonicida subsp. salmonicida A449: insights into the evolution of a fish pathogen.</title>
        <authorList>
            <person name="Reith M.E."/>
            <person name="Singh R.K."/>
            <person name="Curtis B."/>
            <person name="Boyd J.M."/>
            <person name="Bouevitch A."/>
            <person name="Kimball J."/>
            <person name="Munholland J."/>
            <person name="Murphy C."/>
            <person name="Sarty D."/>
            <person name="Williams J."/>
            <person name="Nash J.H."/>
            <person name="Johnson S.C."/>
            <person name="Brown L.L."/>
        </authorList>
    </citation>
    <scope>NUCLEOTIDE SEQUENCE [LARGE SCALE GENOMIC DNA]</scope>
    <source>
        <strain>A449</strain>
    </source>
</reference>
<accession>A4SSZ5</accession>
<sequence length="105" mass="11299">MAAKIRREDEVIVLTGKDKGKRGKVTQVLVTEGKVLVEGINLVKKHQKPVPALGQAGGIISKEAPMDVSNVALFNSAAGKADRVGFRIEDGKKVRFFKSTGELVK</sequence>
<protein>
    <recommendedName>
        <fullName evidence="1">Large ribosomal subunit protein uL24</fullName>
    </recommendedName>
    <alternativeName>
        <fullName evidence="2">50S ribosomal protein L24</fullName>
    </alternativeName>
</protein>
<proteinExistence type="inferred from homology"/>
<keyword id="KW-0687">Ribonucleoprotein</keyword>
<keyword id="KW-0689">Ribosomal protein</keyword>
<keyword id="KW-0694">RNA-binding</keyword>
<keyword id="KW-0699">rRNA-binding</keyword>
<gene>
    <name evidence="1" type="primary">rplX</name>
    <name type="ordered locus">ASA_4076</name>
</gene>
<dbReference type="EMBL" id="CP000644">
    <property type="protein sequence ID" value="ABO92017.1"/>
    <property type="molecule type" value="Genomic_DNA"/>
</dbReference>
<dbReference type="RefSeq" id="WP_005319727.1">
    <property type="nucleotide sequence ID" value="NC_009348.1"/>
</dbReference>
<dbReference type="SMR" id="A4SSZ5"/>
<dbReference type="STRING" id="29491.GCA_000820065_03476"/>
<dbReference type="GeneID" id="79877777"/>
<dbReference type="KEGG" id="asa:ASA_4076"/>
<dbReference type="eggNOG" id="COG0198">
    <property type="taxonomic scope" value="Bacteria"/>
</dbReference>
<dbReference type="HOGENOM" id="CLU_093315_2_2_6"/>
<dbReference type="Proteomes" id="UP000000225">
    <property type="component" value="Chromosome"/>
</dbReference>
<dbReference type="GO" id="GO:1990904">
    <property type="term" value="C:ribonucleoprotein complex"/>
    <property type="evidence" value="ECO:0007669"/>
    <property type="project" value="UniProtKB-KW"/>
</dbReference>
<dbReference type="GO" id="GO:0005840">
    <property type="term" value="C:ribosome"/>
    <property type="evidence" value="ECO:0007669"/>
    <property type="project" value="UniProtKB-KW"/>
</dbReference>
<dbReference type="GO" id="GO:0019843">
    <property type="term" value="F:rRNA binding"/>
    <property type="evidence" value="ECO:0007669"/>
    <property type="project" value="UniProtKB-UniRule"/>
</dbReference>
<dbReference type="GO" id="GO:0003735">
    <property type="term" value="F:structural constituent of ribosome"/>
    <property type="evidence" value="ECO:0007669"/>
    <property type="project" value="InterPro"/>
</dbReference>
<dbReference type="GO" id="GO:0006412">
    <property type="term" value="P:translation"/>
    <property type="evidence" value="ECO:0007669"/>
    <property type="project" value="UniProtKB-UniRule"/>
</dbReference>
<dbReference type="CDD" id="cd06089">
    <property type="entry name" value="KOW_RPL26"/>
    <property type="match status" value="1"/>
</dbReference>
<dbReference type="FunFam" id="2.30.30.30:FF:000004">
    <property type="entry name" value="50S ribosomal protein L24"/>
    <property type="match status" value="1"/>
</dbReference>
<dbReference type="Gene3D" id="2.30.30.30">
    <property type="match status" value="1"/>
</dbReference>
<dbReference type="HAMAP" id="MF_01326_B">
    <property type="entry name" value="Ribosomal_uL24_B"/>
    <property type="match status" value="1"/>
</dbReference>
<dbReference type="InterPro" id="IPR005824">
    <property type="entry name" value="KOW"/>
</dbReference>
<dbReference type="InterPro" id="IPR014722">
    <property type="entry name" value="Rib_uL2_dom2"/>
</dbReference>
<dbReference type="InterPro" id="IPR003256">
    <property type="entry name" value="Ribosomal_uL24"/>
</dbReference>
<dbReference type="InterPro" id="IPR005825">
    <property type="entry name" value="Ribosomal_uL24_CS"/>
</dbReference>
<dbReference type="InterPro" id="IPR041988">
    <property type="entry name" value="Ribosomal_uL24_KOW"/>
</dbReference>
<dbReference type="InterPro" id="IPR008991">
    <property type="entry name" value="Translation_prot_SH3-like_sf"/>
</dbReference>
<dbReference type="NCBIfam" id="TIGR01079">
    <property type="entry name" value="rplX_bact"/>
    <property type="match status" value="1"/>
</dbReference>
<dbReference type="PANTHER" id="PTHR12903">
    <property type="entry name" value="MITOCHONDRIAL RIBOSOMAL PROTEIN L24"/>
    <property type="match status" value="1"/>
</dbReference>
<dbReference type="Pfam" id="PF00467">
    <property type="entry name" value="KOW"/>
    <property type="match status" value="1"/>
</dbReference>
<dbReference type="Pfam" id="PF17136">
    <property type="entry name" value="ribosomal_L24"/>
    <property type="match status" value="1"/>
</dbReference>
<dbReference type="SUPFAM" id="SSF50104">
    <property type="entry name" value="Translation proteins SH3-like domain"/>
    <property type="match status" value="1"/>
</dbReference>
<dbReference type="PROSITE" id="PS01108">
    <property type="entry name" value="RIBOSOMAL_L24"/>
    <property type="match status" value="1"/>
</dbReference>
<organism>
    <name type="scientific">Aeromonas salmonicida (strain A449)</name>
    <dbReference type="NCBI Taxonomy" id="382245"/>
    <lineage>
        <taxon>Bacteria</taxon>
        <taxon>Pseudomonadati</taxon>
        <taxon>Pseudomonadota</taxon>
        <taxon>Gammaproteobacteria</taxon>
        <taxon>Aeromonadales</taxon>
        <taxon>Aeromonadaceae</taxon>
        <taxon>Aeromonas</taxon>
    </lineage>
</organism>
<feature type="chain" id="PRO_1000052175" description="Large ribosomal subunit protein uL24">
    <location>
        <begin position="1"/>
        <end position="105"/>
    </location>
</feature>
<comment type="function">
    <text evidence="1">One of two assembly initiator proteins, it binds directly to the 5'-end of the 23S rRNA, where it nucleates assembly of the 50S subunit.</text>
</comment>
<comment type="function">
    <text evidence="1">One of the proteins that surrounds the polypeptide exit tunnel on the outside of the subunit.</text>
</comment>
<comment type="subunit">
    <text evidence="1">Part of the 50S ribosomal subunit.</text>
</comment>
<comment type="similarity">
    <text evidence="1">Belongs to the universal ribosomal protein uL24 family.</text>
</comment>